<geneLocation type="chloroplast"/>
<comment type="function">
    <text evidence="1">NDH shuttles electrons from NAD(P)H:plastoquinone, via FMN and iron-sulfur (Fe-S) centers, to quinones in the photosynthetic chain and possibly in a chloroplast respiratory chain. The immediate electron acceptor for the enzyme in this species is believed to be plastoquinone. Couples the redox reaction to proton translocation, and thus conserves the redox energy in a proton gradient.</text>
</comment>
<comment type="catalytic activity">
    <reaction evidence="1">
        <text>a plastoquinone + NADH + (n+1) H(+)(in) = a plastoquinol + NAD(+) + n H(+)(out)</text>
        <dbReference type="Rhea" id="RHEA:42608"/>
        <dbReference type="Rhea" id="RHEA-COMP:9561"/>
        <dbReference type="Rhea" id="RHEA-COMP:9562"/>
        <dbReference type="ChEBI" id="CHEBI:15378"/>
        <dbReference type="ChEBI" id="CHEBI:17757"/>
        <dbReference type="ChEBI" id="CHEBI:57540"/>
        <dbReference type="ChEBI" id="CHEBI:57945"/>
        <dbReference type="ChEBI" id="CHEBI:62192"/>
    </reaction>
</comment>
<comment type="catalytic activity">
    <reaction evidence="1">
        <text>a plastoquinone + NADPH + (n+1) H(+)(in) = a plastoquinol + NADP(+) + n H(+)(out)</text>
        <dbReference type="Rhea" id="RHEA:42612"/>
        <dbReference type="Rhea" id="RHEA-COMP:9561"/>
        <dbReference type="Rhea" id="RHEA-COMP:9562"/>
        <dbReference type="ChEBI" id="CHEBI:15378"/>
        <dbReference type="ChEBI" id="CHEBI:17757"/>
        <dbReference type="ChEBI" id="CHEBI:57783"/>
        <dbReference type="ChEBI" id="CHEBI:58349"/>
        <dbReference type="ChEBI" id="CHEBI:62192"/>
    </reaction>
</comment>
<comment type="cofactor">
    <cofactor evidence="1">
        <name>[4Fe-4S] cluster</name>
        <dbReference type="ChEBI" id="CHEBI:49883"/>
    </cofactor>
    <text evidence="1">Binds 2 [4Fe-4S] clusters per subunit.</text>
</comment>
<comment type="subunit">
    <text evidence="1">NDH is composed of at least 16 different subunits, 5 of which are encoded in the nucleus.</text>
</comment>
<comment type="subcellular location">
    <subcellularLocation>
        <location evidence="1">Plastid</location>
        <location evidence="1">Chloroplast thylakoid membrane</location>
        <topology evidence="1">Peripheral membrane protein</topology>
    </subcellularLocation>
</comment>
<comment type="similarity">
    <text evidence="1">Belongs to the complex I 23 kDa subunit family.</text>
</comment>
<sequence length="180" mass="21165">MFPMVTGFMSYGQQTIRAARYIGQSFIITLSHTNRLPITIHYPYEKSITSERFRGRIHFEFDKCIACEVCVRVCPIDLPLVDWRFEKDIKRKQLLNYSIDFGVCIFCGNCVEYCPTNCLSMTEEYELSTYDRHELNYNQIALSRLPISIMGDYTIQTIRNSTQSKIDEEKSWNSRTITDY</sequence>
<keyword id="KW-0004">4Fe-4S</keyword>
<keyword id="KW-0150">Chloroplast</keyword>
<keyword id="KW-0408">Iron</keyword>
<keyword id="KW-0411">Iron-sulfur</keyword>
<keyword id="KW-0472">Membrane</keyword>
<keyword id="KW-0479">Metal-binding</keyword>
<keyword id="KW-0520">NAD</keyword>
<keyword id="KW-0521">NADP</keyword>
<keyword id="KW-0934">Plastid</keyword>
<keyword id="KW-0618">Plastoquinone</keyword>
<keyword id="KW-0874">Quinone</keyword>
<keyword id="KW-1185">Reference proteome</keyword>
<keyword id="KW-0677">Repeat</keyword>
<keyword id="KW-0793">Thylakoid</keyword>
<keyword id="KW-1278">Translocase</keyword>
<name>NDHI_ORYSI</name>
<gene>
    <name evidence="1" type="primary">ndhI</name>
    <name type="synonym">frxB</name>
    <name type="ORF">9311172</name>
</gene>
<dbReference type="EC" id="7.1.1.-" evidence="1"/>
<dbReference type="EMBL" id="AY522329">
    <property type="protein sequence ID" value="AAS46096.1"/>
    <property type="molecule type" value="Genomic_DNA"/>
</dbReference>
<dbReference type="RefSeq" id="YP_009161423.1">
    <property type="nucleotide sequence ID" value="NC_027678.1"/>
</dbReference>
<dbReference type="RefSeq" id="YP_654256.1">
    <property type="nucleotide sequence ID" value="NC_008155.1"/>
</dbReference>
<dbReference type="SMR" id="P0C385"/>
<dbReference type="STRING" id="39946.P0C385"/>
<dbReference type="EnsemblPlants" id="OsKYG_04g0005620.01">
    <property type="protein sequence ID" value="OsKYG_04g0005620.01"/>
    <property type="gene ID" value="OsKYG_04g0005620"/>
</dbReference>
<dbReference type="GeneID" id="4126876"/>
<dbReference type="Gramene" id="OsKYG_04g0005620.01">
    <property type="protein sequence ID" value="OsKYG_04g0005620.01"/>
    <property type="gene ID" value="OsKYG_04g0005620"/>
</dbReference>
<dbReference type="Proteomes" id="UP000007015">
    <property type="component" value="Chloroplast"/>
</dbReference>
<dbReference type="GO" id="GO:0009535">
    <property type="term" value="C:chloroplast thylakoid membrane"/>
    <property type="evidence" value="ECO:0007669"/>
    <property type="project" value="UniProtKB-SubCell"/>
</dbReference>
<dbReference type="GO" id="GO:0009536">
    <property type="term" value="C:plastid"/>
    <property type="evidence" value="ECO:0000305"/>
    <property type="project" value="Gramene"/>
</dbReference>
<dbReference type="GO" id="GO:0051539">
    <property type="term" value="F:4 iron, 4 sulfur cluster binding"/>
    <property type="evidence" value="ECO:0007669"/>
    <property type="project" value="UniProtKB-KW"/>
</dbReference>
<dbReference type="GO" id="GO:0005506">
    <property type="term" value="F:iron ion binding"/>
    <property type="evidence" value="ECO:0007669"/>
    <property type="project" value="UniProtKB-UniRule"/>
</dbReference>
<dbReference type="GO" id="GO:0008137">
    <property type="term" value="F:NADH dehydrogenase (ubiquinone) activity"/>
    <property type="evidence" value="ECO:0007669"/>
    <property type="project" value="InterPro"/>
</dbReference>
<dbReference type="GO" id="GO:0048038">
    <property type="term" value="F:quinone binding"/>
    <property type="evidence" value="ECO:0007669"/>
    <property type="project" value="UniProtKB-KW"/>
</dbReference>
<dbReference type="GO" id="GO:0019684">
    <property type="term" value="P:photosynthesis, light reaction"/>
    <property type="evidence" value="ECO:0007669"/>
    <property type="project" value="UniProtKB-UniRule"/>
</dbReference>
<dbReference type="Gene3D" id="3.30.70.3270">
    <property type="match status" value="1"/>
</dbReference>
<dbReference type="HAMAP" id="MF_01351">
    <property type="entry name" value="NDH1_NuoI"/>
    <property type="match status" value="1"/>
</dbReference>
<dbReference type="InterPro" id="IPR017896">
    <property type="entry name" value="4Fe4S_Fe-S-bd"/>
</dbReference>
<dbReference type="InterPro" id="IPR017900">
    <property type="entry name" value="4Fe4S_Fe_S_CS"/>
</dbReference>
<dbReference type="InterPro" id="IPR010226">
    <property type="entry name" value="NADH_quinone_OxRdtase_chainI"/>
</dbReference>
<dbReference type="InterPro" id="IPR004497">
    <property type="entry name" value="NDHI"/>
</dbReference>
<dbReference type="NCBIfam" id="TIGR00403">
    <property type="entry name" value="ndhI"/>
    <property type="match status" value="1"/>
</dbReference>
<dbReference type="NCBIfam" id="TIGR01971">
    <property type="entry name" value="NuoI"/>
    <property type="match status" value="1"/>
</dbReference>
<dbReference type="NCBIfam" id="NF004537">
    <property type="entry name" value="PRK05888.1-3"/>
    <property type="match status" value="1"/>
</dbReference>
<dbReference type="PANTHER" id="PTHR47275">
    <property type="entry name" value="NAD(P)H-QUINONE OXIDOREDUCTASE SUBUNIT I, CHLOROPLASTIC"/>
    <property type="match status" value="1"/>
</dbReference>
<dbReference type="PANTHER" id="PTHR47275:SF3">
    <property type="entry name" value="NAD(P)H-QUINONE OXIDOREDUCTASE SUBUNIT I, CHLOROPLASTIC"/>
    <property type="match status" value="1"/>
</dbReference>
<dbReference type="Pfam" id="PF13237">
    <property type="entry name" value="Fer4_10"/>
    <property type="match status" value="1"/>
</dbReference>
<dbReference type="SUPFAM" id="SSF54862">
    <property type="entry name" value="4Fe-4S ferredoxins"/>
    <property type="match status" value="1"/>
</dbReference>
<dbReference type="PROSITE" id="PS00198">
    <property type="entry name" value="4FE4S_FER_1"/>
    <property type="match status" value="2"/>
</dbReference>
<dbReference type="PROSITE" id="PS51379">
    <property type="entry name" value="4FE4S_FER_2"/>
    <property type="match status" value="2"/>
</dbReference>
<proteinExistence type="inferred from homology"/>
<accession>P0C385</accession>
<accession>P12099</accession>
<accession>Q6QXX0</accession>
<accession>Q6QY33</accession>
<organism>
    <name type="scientific">Oryza sativa subsp. indica</name>
    <name type="common">Rice</name>
    <dbReference type="NCBI Taxonomy" id="39946"/>
    <lineage>
        <taxon>Eukaryota</taxon>
        <taxon>Viridiplantae</taxon>
        <taxon>Streptophyta</taxon>
        <taxon>Embryophyta</taxon>
        <taxon>Tracheophyta</taxon>
        <taxon>Spermatophyta</taxon>
        <taxon>Magnoliopsida</taxon>
        <taxon>Liliopsida</taxon>
        <taxon>Poales</taxon>
        <taxon>Poaceae</taxon>
        <taxon>BOP clade</taxon>
        <taxon>Oryzoideae</taxon>
        <taxon>Oryzeae</taxon>
        <taxon>Oryzinae</taxon>
        <taxon>Oryza</taxon>
        <taxon>Oryza sativa</taxon>
    </lineage>
</organism>
<evidence type="ECO:0000255" key="1">
    <source>
        <dbReference type="HAMAP-Rule" id="MF_01351"/>
    </source>
</evidence>
<protein>
    <recommendedName>
        <fullName evidence="1">NAD(P)H-quinone oxidoreductase subunit I, chloroplastic</fullName>
        <ecNumber evidence="1">7.1.1.-</ecNumber>
    </recommendedName>
    <alternativeName>
        <fullName evidence="1">NAD(P)H dehydrogenase subunit I</fullName>
        <shortName evidence="1">NDH subunit I</shortName>
    </alternativeName>
    <alternativeName>
        <fullName evidence="1">NADH-plastoquinone oxidoreductase subunit I</fullName>
    </alternativeName>
</protein>
<feature type="chain" id="PRO_0000289034" description="NAD(P)H-quinone oxidoreductase subunit I, chloroplastic">
    <location>
        <begin position="1"/>
        <end position="180"/>
    </location>
</feature>
<feature type="domain" description="4Fe-4S ferredoxin-type 1" evidence="1">
    <location>
        <begin position="55"/>
        <end position="84"/>
    </location>
</feature>
<feature type="domain" description="4Fe-4S ferredoxin-type 2" evidence="1">
    <location>
        <begin position="95"/>
        <end position="124"/>
    </location>
</feature>
<feature type="binding site" evidence="1">
    <location>
        <position position="64"/>
    </location>
    <ligand>
        <name>[4Fe-4S] cluster</name>
        <dbReference type="ChEBI" id="CHEBI:49883"/>
        <label>1</label>
    </ligand>
</feature>
<feature type="binding site" evidence="1">
    <location>
        <position position="67"/>
    </location>
    <ligand>
        <name>[4Fe-4S] cluster</name>
        <dbReference type="ChEBI" id="CHEBI:49883"/>
        <label>1</label>
    </ligand>
</feature>
<feature type="binding site" evidence="1">
    <location>
        <position position="70"/>
    </location>
    <ligand>
        <name>[4Fe-4S] cluster</name>
        <dbReference type="ChEBI" id="CHEBI:49883"/>
        <label>1</label>
    </ligand>
</feature>
<feature type="binding site" evidence="1">
    <location>
        <position position="74"/>
    </location>
    <ligand>
        <name>[4Fe-4S] cluster</name>
        <dbReference type="ChEBI" id="CHEBI:49883"/>
        <label>2</label>
    </ligand>
</feature>
<feature type="binding site" evidence="1">
    <location>
        <position position="104"/>
    </location>
    <ligand>
        <name>[4Fe-4S] cluster</name>
        <dbReference type="ChEBI" id="CHEBI:49883"/>
        <label>2</label>
    </ligand>
</feature>
<feature type="binding site" evidence="1">
    <location>
        <position position="107"/>
    </location>
    <ligand>
        <name>[4Fe-4S] cluster</name>
        <dbReference type="ChEBI" id="CHEBI:49883"/>
        <label>2</label>
    </ligand>
</feature>
<feature type="binding site" evidence="1">
    <location>
        <position position="110"/>
    </location>
    <ligand>
        <name>[4Fe-4S] cluster</name>
        <dbReference type="ChEBI" id="CHEBI:49883"/>
        <label>2</label>
    </ligand>
</feature>
<feature type="binding site" evidence="1">
    <location>
        <position position="114"/>
    </location>
    <ligand>
        <name>[4Fe-4S] cluster</name>
        <dbReference type="ChEBI" id="CHEBI:49883"/>
        <label>1</label>
    </ligand>
</feature>
<reference key="1">
    <citation type="journal article" date="2004" name="Plant Physiol.">
        <title>A comparison of rice chloroplast genomes.</title>
        <authorList>
            <person name="Tang J."/>
            <person name="Xia H."/>
            <person name="Cao M."/>
            <person name="Zhang X."/>
            <person name="Zeng W."/>
            <person name="Hu S."/>
            <person name="Tong W."/>
            <person name="Wang J."/>
            <person name="Wang J."/>
            <person name="Yu J."/>
            <person name="Yang H."/>
            <person name="Zhu L."/>
        </authorList>
    </citation>
    <scope>NUCLEOTIDE SEQUENCE [LARGE SCALE GENOMIC DNA]</scope>
    <source>
        <strain>cv. 93-11</strain>
    </source>
</reference>